<comment type="similarity">
    <text evidence="1">Belongs to the protease inhibitor I11 (ecotin) family.</text>
</comment>
<accession>Q57ZQ7</accession>
<protein>
    <recommendedName>
        <fullName>Ecotin-like protein 2</fullName>
    </recommendedName>
</protein>
<evidence type="ECO:0000305" key="1"/>
<evidence type="ECO:0000312" key="2">
    <source>
        <dbReference type="Proteomes" id="UP000008524"/>
    </source>
</evidence>
<dbReference type="EMBL" id="AC104617">
    <property type="protein sequence ID" value="AAX79109.1"/>
    <property type="molecule type" value="Genomic_DNA"/>
</dbReference>
<dbReference type="SMR" id="Q57ZQ7"/>
<dbReference type="STRING" id="185431.Q57ZQ7"/>
<dbReference type="PaxDb" id="5691-AAZ11303"/>
<dbReference type="GeneID" id="3657301"/>
<dbReference type="KEGG" id="tbr:Tb927.5.1880"/>
<dbReference type="VEuPathDB" id="TriTrypDB:Tb927.5.1880"/>
<dbReference type="InParanoid" id="Q57ZQ7"/>
<dbReference type="OMA" id="PKAEKGM"/>
<dbReference type="OrthoDB" id="16445at2759"/>
<dbReference type="Proteomes" id="UP000008524">
    <property type="component" value="Chromosome 5"/>
</dbReference>
<dbReference type="GO" id="GO:0097740">
    <property type="term" value="C:paraflagellar rod"/>
    <property type="evidence" value="ECO:0000314"/>
    <property type="project" value="GeneDB"/>
</dbReference>
<dbReference type="GO" id="GO:0004867">
    <property type="term" value="F:serine-type endopeptidase inhibitor activity"/>
    <property type="evidence" value="ECO:0007669"/>
    <property type="project" value="InterPro"/>
</dbReference>
<dbReference type="GO" id="GO:0042784">
    <property type="term" value="P:symbiont-mediated suppression of host complement activation"/>
    <property type="evidence" value="ECO:0000266"/>
    <property type="project" value="GeneDB"/>
</dbReference>
<dbReference type="Gene3D" id="2.60.40.550">
    <property type="entry name" value="Ecotin"/>
    <property type="match status" value="1"/>
</dbReference>
<dbReference type="Gene3D" id="4.10.1230.10">
    <property type="entry name" value="Ecotin, trypsin inhibitor"/>
    <property type="match status" value="1"/>
</dbReference>
<dbReference type="InterPro" id="IPR027438">
    <property type="entry name" value="Ecotin_C"/>
</dbReference>
<dbReference type="InterPro" id="IPR036198">
    <property type="entry name" value="Ecotin_sf"/>
</dbReference>
<dbReference type="InterPro" id="IPR005658">
    <property type="entry name" value="Prot_inh_ecotin"/>
</dbReference>
<dbReference type="PANTHER" id="PTHR35890">
    <property type="match status" value="1"/>
</dbReference>
<dbReference type="PANTHER" id="PTHR35890:SF3">
    <property type="entry name" value="ECOTIN"/>
    <property type="match status" value="1"/>
</dbReference>
<dbReference type="Pfam" id="PF03974">
    <property type="entry name" value="Ecotin"/>
    <property type="match status" value="1"/>
</dbReference>
<dbReference type="PIRSF" id="PIRSF006865">
    <property type="entry name" value="Prot_inh_ecotin"/>
    <property type="match status" value="1"/>
</dbReference>
<dbReference type="SUPFAM" id="SSF49772">
    <property type="entry name" value="Ecotin, trypsin inhibitor"/>
    <property type="match status" value="1"/>
</dbReference>
<reference key="1">
    <citation type="journal article" date="2005" name="Science">
        <title>The genome of the African trypanosome Trypanosoma brucei.</title>
        <authorList>
            <person name="Berriman M."/>
            <person name="Ghedin E."/>
            <person name="Hertz-Fowler C."/>
            <person name="Blandin G."/>
            <person name="Renauld H."/>
            <person name="Bartholomeu D.C."/>
            <person name="Lennard N.J."/>
            <person name="Caler E."/>
            <person name="Hamlin N.E."/>
            <person name="Haas B."/>
            <person name="Bohme U."/>
            <person name="Hannick L."/>
            <person name="Aslett M.A."/>
            <person name="Shallom J."/>
            <person name="Marcello L."/>
            <person name="Hou L."/>
            <person name="Wickstead B."/>
            <person name="Alsmark U.C.M."/>
            <person name="Arrowsmith C."/>
            <person name="Atkin R.J."/>
            <person name="Barron A.J."/>
            <person name="Bringaud F."/>
            <person name="Brooks K."/>
            <person name="Carrington M."/>
            <person name="Cherevach I."/>
            <person name="Chillingworth T.J."/>
            <person name="Churcher C."/>
            <person name="Clark L.N."/>
            <person name="Corton C.H."/>
            <person name="Cronin A."/>
            <person name="Davies R.M."/>
            <person name="Doggett J."/>
            <person name="Djikeng A."/>
            <person name="Feldblyum T."/>
            <person name="Field M.C."/>
            <person name="Fraser A."/>
            <person name="Goodhead I."/>
            <person name="Hance Z."/>
            <person name="Harper D."/>
            <person name="Harris B.R."/>
            <person name="Hauser H."/>
            <person name="Hostetler J."/>
            <person name="Ivens A."/>
            <person name="Jagels K."/>
            <person name="Johnson D."/>
            <person name="Johnson J."/>
            <person name="Jones K."/>
            <person name="Kerhornou A.X."/>
            <person name="Koo H."/>
            <person name="Larke N."/>
            <person name="Landfear S."/>
            <person name="Larkin C."/>
            <person name="Leech V."/>
            <person name="Line A."/>
            <person name="Lord A."/>
            <person name="Macleod A."/>
            <person name="Mooney P.J."/>
            <person name="Moule S."/>
            <person name="Martin D.M."/>
            <person name="Morgan G.W."/>
            <person name="Mungall K."/>
            <person name="Norbertczak H."/>
            <person name="Ormond D."/>
            <person name="Pai G."/>
            <person name="Peacock C.S."/>
            <person name="Peterson J."/>
            <person name="Quail M.A."/>
            <person name="Rabbinowitsch E."/>
            <person name="Rajandream M.A."/>
            <person name="Reitter C."/>
            <person name="Salzberg S.L."/>
            <person name="Sanders M."/>
            <person name="Schobel S."/>
            <person name="Sharp S."/>
            <person name="Simmonds M."/>
            <person name="Simpson A.J."/>
            <person name="Tallon L."/>
            <person name="Turner C.M."/>
            <person name="Tait A."/>
            <person name="Tivey A.R."/>
            <person name="Van Aken S."/>
            <person name="Walker D."/>
            <person name="Wanless D."/>
            <person name="Wang S."/>
            <person name="White B."/>
            <person name="White O."/>
            <person name="Whitehead S."/>
            <person name="Woodward J."/>
            <person name="Wortman J."/>
            <person name="Adams M.D."/>
            <person name="Embley T.M."/>
            <person name="Gull K."/>
            <person name="Ullu E."/>
            <person name="Barry J.D."/>
            <person name="Fairlamb A.H."/>
            <person name="Opperdoes F."/>
            <person name="Barrell B.G."/>
            <person name="Donelson J.E."/>
            <person name="Hall N."/>
            <person name="Fraser C.M."/>
            <person name="Melville S.E."/>
            <person name="El-Sayed N.M.A."/>
        </authorList>
    </citation>
    <scope>NUCLEOTIDE SEQUENCE [LARGE SCALE GENOMIC DNA]</scope>
    <source>
        <strain evidence="2">927/4 GUTat10.1</strain>
    </source>
</reference>
<gene>
    <name type="ORF">Tb927.5.1880</name>
</gene>
<name>ECOT2_TRYB2</name>
<sequence length="154" mass="17810">MTDRPPTLADFKAPYPEPGPDQTCCIILLEEKPDEEENYRVELIPGRVMEDGLATGTVSGVVREEVIHGWGYSYYVVEMEPLVTTRRSIRSFHRPTRFVPVPTKHFIRYNSQLPVVVYLPHNTELRYRVWTPIDMQKVEPTEPEGLLKIEERAG</sequence>
<keyword id="KW-1185">Reference proteome</keyword>
<feature type="chain" id="PRO_0000291609" description="Ecotin-like protein 2">
    <location>
        <begin position="1"/>
        <end position="154"/>
    </location>
</feature>
<proteinExistence type="inferred from homology"/>
<organism>
    <name type="scientific">Trypanosoma brucei brucei (strain 927/4 GUTat10.1)</name>
    <dbReference type="NCBI Taxonomy" id="185431"/>
    <lineage>
        <taxon>Eukaryota</taxon>
        <taxon>Discoba</taxon>
        <taxon>Euglenozoa</taxon>
        <taxon>Kinetoplastea</taxon>
        <taxon>Metakinetoplastina</taxon>
        <taxon>Trypanosomatida</taxon>
        <taxon>Trypanosomatidae</taxon>
        <taxon>Trypanosoma</taxon>
    </lineage>
</organism>